<comment type="function">
    <text evidence="1">Bifunctional enzyme with both catalase and broad-spectrum peroxidase activity.</text>
</comment>
<comment type="catalytic activity">
    <reaction evidence="1">
        <text>H2O2 + AH2 = A + 2 H2O</text>
        <dbReference type="Rhea" id="RHEA:30275"/>
        <dbReference type="ChEBI" id="CHEBI:13193"/>
        <dbReference type="ChEBI" id="CHEBI:15377"/>
        <dbReference type="ChEBI" id="CHEBI:16240"/>
        <dbReference type="ChEBI" id="CHEBI:17499"/>
        <dbReference type="EC" id="1.11.1.21"/>
    </reaction>
</comment>
<comment type="catalytic activity">
    <reaction evidence="1">
        <text>2 H2O2 = O2 + 2 H2O</text>
        <dbReference type="Rhea" id="RHEA:20309"/>
        <dbReference type="ChEBI" id="CHEBI:15377"/>
        <dbReference type="ChEBI" id="CHEBI:15379"/>
        <dbReference type="ChEBI" id="CHEBI:16240"/>
        <dbReference type="EC" id="1.11.1.21"/>
    </reaction>
</comment>
<comment type="cofactor">
    <cofactor evidence="1">
        <name>heme b</name>
        <dbReference type="ChEBI" id="CHEBI:60344"/>
    </cofactor>
    <text evidence="1">Binds 1 heme b (iron(II)-protoporphyrin IX) group per dimer.</text>
</comment>
<comment type="subunit">
    <text evidence="1">Homodimer or homotetramer.</text>
</comment>
<comment type="PTM">
    <text evidence="1">Formation of the three residue Trp-Tyr-Met cross-link is important for the catalase, but not the peroxidase activity of the enzyme.</text>
</comment>
<comment type="similarity">
    <text evidence="1">Belongs to the peroxidase family. Peroxidase/catalase subfamily.</text>
</comment>
<proteinExistence type="inferred from homology"/>
<feature type="chain" id="PRO_0000354778" description="Catalase-peroxidase">
    <location>
        <begin position="1"/>
        <end position="726"/>
    </location>
</feature>
<feature type="region of interest" description="Disordered" evidence="2">
    <location>
        <begin position="1"/>
        <end position="33"/>
    </location>
</feature>
<feature type="active site" description="Proton acceptor" evidence="1">
    <location>
        <position position="106"/>
    </location>
</feature>
<feature type="binding site" description="axial binding residue" evidence="1">
    <location>
        <position position="267"/>
    </location>
    <ligand>
        <name>heme b</name>
        <dbReference type="ChEBI" id="CHEBI:60344"/>
    </ligand>
    <ligandPart>
        <name>Fe</name>
        <dbReference type="ChEBI" id="CHEBI:18248"/>
    </ligandPart>
</feature>
<feature type="site" description="Transition state stabilizer" evidence="1">
    <location>
        <position position="102"/>
    </location>
</feature>
<feature type="cross-link" description="Tryptophyl-tyrosyl-methioninium (Trp-Tyr) (with M-252)" evidence="1">
    <location>
        <begin position="105"/>
        <end position="226"/>
    </location>
</feature>
<feature type="cross-link" description="Tryptophyl-tyrosyl-methioninium (Tyr-Met) (with W-105)" evidence="1">
    <location>
        <begin position="226"/>
        <end position="252"/>
    </location>
</feature>
<protein>
    <recommendedName>
        <fullName evidence="1">Catalase-peroxidase</fullName>
        <shortName evidence="1">CP</shortName>
        <ecNumber evidence="1">1.11.1.21</ecNumber>
    </recommendedName>
    <alternativeName>
        <fullName evidence="1">Peroxidase/catalase</fullName>
    </alternativeName>
</protein>
<gene>
    <name evidence="1" type="primary">katG</name>
    <name type="ordered locus">EcSMS35_4390</name>
</gene>
<dbReference type="EC" id="1.11.1.21" evidence="1"/>
<dbReference type="EMBL" id="CP000970">
    <property type="protein sequence ID" value="ACB18624.1"/>
    <property type="molecule type" value="Genomic_DNA"/>
</dbReference>
<dbReference type="RefSeq" id="WP_001296626.1">
    <property type="nucleotide sequence ID" value="NC_010498.1"/>
</dbReference>
<dbReference type="SMR" id="B1LNQ3"/>
<dbReference type="KEGG" id="ecm:EcSMS35_4390"/>
<dbReference type="HOGENOM" id="CLU_025424_2_0_6"/>
<dbReference type="Proteomes" id="UP000007011">
    <property type="component" value="Chromosome"/>
</dbReference>
<dbReference type="GO" id="GO:0005829">
    <property type="term" value="C:cytosol"/>
    <property type="evidence" value="ECO:0007669"/>
    <property type="project" value="TreeGrafter"/>
</dbReference>
<dbReference type="GO" id="GO:0004096">
    <property type="term" value="F:catalase activity"/>
    <property type="evidence" value="ECO:0007669"/>
    <property type="project" value="UniProtKB-UniRule"/>
</dbReference>
<dbReference type="GO" id="GO:0020037">
    <property type="term" value="F:heme binding"/>
    <property type="evidence" value="ECO:0007669"/>
    <property type="project" value="InterPro"/>
</dbReference>
<dbReference type="GO" id="GO:0046872">
    <property type="term" value="F:metal ion binding"/>
    <property type="evidence" value="ECO:0007669"/>
    <property type="project" value="UniProtKB-KW"/>
</dbReference>
<dbReference type="GO" id="GO:0070301">
    <property type="term" value="P:cellular response to hydrogen peroxide"/>
    <property type="evidence" value="ECO:0007669"/>
    <property type="project" value="TreeGrafter"/>
</dbReference>
<dbReference type="GO" id="GO:0042744">
    <property type="term" value="P:hydrogen peroxide catabolic process"/>
    <property type="evidence" value="ECO:0007669"/>
    <property type="project" value="UniProtKB-KW"/>
</dbReference>
<dbReference type="CDD" id="cd08200">
    <property type="entry name" value="catalase_peroxidase_2"/>
    <property type="match status" value="1"/>
</dbReference>
<dbReference type="FunFam" id="1.10.420.10:FF:000002">
    <property type="entry name" value="Catalase-peroxidase"/>
    <property type="match status" value="1"/>
</dbReference>
<dbReference type="FunFam" id="1.10.420.10:FF:000004">
    <property type="entry name" value="Catalase-peroxidase"/>
    <property type="match status" value="1"/>
</dbReference>
<dbReference type="FunFam" id="1.10.520.10:FF:000002">
    <property type="entry name" value="Catalase-peroxidase"/>
    <property type="match status" value="1"/>
</dbReference>
<dbReference type="Gene3D" id="1.10.520.10">
    <property type="match status" value="2"/>
</dbReference>
<dbReference type="Gene3D" id="1.10.420.10">
    <property type="entry name" value="Peroxidase, domain 2"/>
    <property type="match status" value="2"/>
</dbReference>
<dbReference type="HAMAP" id="MF_01961">
    <property type="entry name" value="Catal_peroxid"/>
    <property type="match status" value="1"/>
</dbReference>
<dbReference type="InterPro" id="IPR000763">
    <property type="entry name" value="Catalase_peroxidase"/>
</dbReference>
<dbReference type="InterPro" id="IPR002016">
    <property type="entry name" value="Haem_peroxidase"/>
</dbReference>
<dbReference type="InterPro" id="IPR010255">
    <property type="entry name" value="Haem_peroxidase_sf"/>
</dbReference>
<dbReference type="InterPro" id="IPR019794">
    <property type="entry name" value="Peroxidases_AS"/>
</dbReference>
<dbReference type="InterPro" id="IPR019793">
    <property type="entry name" value="Peroxidases_heam-ligand_BS"/>
</dbReference>
<dbReference type="NCBIfam" id="TIGR00198">
    <property type="entry name" value="cat_per_HPI"/>
    <property type="match status" value="1"/>
</dbReference>
<dbReference type="NCBIfam" id="NF011635">
    <property type="entry name" value="PRK15061.1"/>
    <property type="match status" value="1"/>
</dbReference>
<dbReference type="PANTHER" id="PTHR30555:SF0">
    <property type="entry name" value="CATALASE-PEROXIDASE"/>
    <property type="match status" value="1"/>
</dbReference>
<dbReference type="PANTHER" id="PTHR30555">
    <property type="entry name" value="HYDROPEROXIDASE I, BIFUNCTIONAL CATALASE-PEROXIDASE"/>
    <property type="match status" value="1"/>
</dbReference>
<dbReference type="Pfam" id="PF00141">
    <property type="entry name" value="peroxidase"/>
    <property type="match status" value="2"/>
</dbReference>
<dbReference type="PRINTS" id="PR00460">
    <property type="entry name" value="BPEROXIDASE"/>
</dbReference>
<dbReference type="PRINTS" id="PR00458">
    <property type="entry name" value="PEROXIDASE"/>
</dbReference>
<dbReference type="SUPFAM" id="SSF48113">
    <property type="entry name" value="Heme-dependent peroxidases"/>
    <property type="match status" value="2"/>
</dbReference>
<dbReference type="PROSITE" id="PS00435">
    <property type="entry name" value="PEROXIDASE_1"/>
    <property type="match status" value="1"/>
</dbReference>
<dbReference type="PROSITE" id="PS00436">
    <property type="entry name" value="PEROXIDASE_2"/>
    <property type="match status" value="1"/>
</dbReference>
<dbReference type="PROSITE" id="PS50873">
    <property type="entry name" value="PEROXIDASE_4"/>
    <property type="match status" value="1"/>
</dbReference>
<name>KATG_ECOSM</name>
<evidence type="ECO:0000255" key="1">
    <source>
        <dbReference type="HAMAP-Rule" id="MF_01961"/>
    </source>
</evidence>
<evidence type="ECO:0000256" key="2">
    <source>
        <dbReference type="SAM" id="MobiDB-lite"/>
    </source>
</evidence>
<accession>B1LNQ3</accession>
<organism>
    <name type="scientific">Escherichia coli (strain SMS-3-5 / SECEC)</name>
    <dbReference type="NCBI Taxonomy" id="439855"/>
    <lineage>
        <taxon>Bacteria</taxon>
        <taxon>Pseudomonadati</taxon>
        <taxon>Pseudomonadota</taxon>
        <taxon>Gammaproteobacteria</taxon>
        <taxon>Enterobacterales</taxon>
        <taxon>Enterobacteriaceae</taxon>
        <taxon>Escherichia</taxon>
    </lineage>
</organism>
<keyword id="KW-0349">Heme</keyword>
<keyword id="KW-0376">Hydrogen peroxide</keyword>
<keyword id="KW-0408">Iron</keyword>
<keyword id="KW-0479">Metal-binding</keyword>
<keyword id="KW-0560">Oxidoreductase</keyword>
<keyword id="KW-0575">Peroxidase</keyword>
<sequence length="726" mass="80026">MSTSDDIHNTTATGKCPFHQGGHDQSAGGGTTTRDWWPNQLRVDLLNQHSNRSNPLGEDFDYRKEFSKLDYYGLKKDLKALLTESQPWWPADWGSYAGLFIRMAWHGAGTYRSIDGRGGAGRGQQRFAPLNSWPDNVSLDKARRLLWPIKQKYGQKISWADLFILAGNVALENSGFRTFGFGAGREDVWEPDLDVNWGDEKAWLTHRHPEALAKAPLGATEMGLIYVNPEGPDHSGEPLSAAAAIRATFGNMGMNDEETVALIAGGHTLGKTHGAGPTSNVGPDPEAAPIEEQGLGWASTYGSGVGADAITSGLEVVWTQTPTQWSNYFFENLFKYEWVQTRSPAGAIQFEAVDAPEIIPDPFDPSKKRKPTMLVTDLTLRFDPEFEKISRRFLNDPQAFNEAFARAWFKLTHRDMGPKSRYIGPEVPKEDLIWQDPLPQPIYNPTEQDIIDLKFAIADSGLSVSELVSVAWASASTFRGGDKRGGANGARLALMPQRDWDVNAAAVRALPVLEKIQKESGKASLADIIVLAGVVGVEKAASAAGLSIHVPFAPGRVDARQDQTDIEMFELLEPIADGFRNYRARLDVSTTESLLIDKAQQLTLTAPEMTALVGGMRVLGANFDGSKNGVFTDRVGVLSNDFFVNLLDMRYEWKATDESKELFEGRDRETGEVKYTASRADLVFGSNSVLRAVAEVYASSDAHEKFVKDFVAAWVKVMNLDRFDLL</sequence>
<reference key="1">
    <citation type="journal article" date="2008" name="J. Bacteriol.">
        <title>Insights into the environmental resistance gene pool from the genome sequence of the multidrug-resistant environmental isolate Escherichia coli SMS-3-5.</title>
        <authorList>
            <person name="Fricke W.F."/>
            <person name="Wright M.S."/>
            <person name="Lindell A.H."/>
            <person name="Harkins D.M."/>
            <person name="Baker-Austin C."/>
            <person name="Ravel J."/>
            <person name="Stepanauskas R."/>
        </authorList>
    </citation>
    <scope>NUCLEOTIDE SEQUENCE [LARGE SCALE GENOMIC DNA]</scope>
    <source>
        <strain>SMS-3-5 / SECEC</strain>
    </source>
</reference>